<protein>
    <recommendedName>
        <fullName evidence="1">ATP-dependent zinc metalloprotease FtsH</fullName>
        <ecNumber evidence="1">3.4.24.-</ecNumber>
    </recommendedName>
</protein>
<reference key="1">
    <citation type="journal article" date="1999" name="J. Mol. Evol.">
        <title>The plastid genome of the cryptophyte alga, Guillardia theta: complete sequence and conserved synteny groups confirm its common ancestry with red algae.</title>
        <authorList>
            <person name="Douglas S.E."/>
            <person name="Penny S.L."/>
        </authorList>
    </citation>
    <scope>NUCLEOTIDE SEQUENCE [LARGE SCALE GENOMIC DNA]</scope>
</reference>
<proteinExistence type="inferred from homology"/>
<feature type="chain" id="PRO_0000084659" description="ATP-dependent zinc metalloprotease FtsH">
    <location>
        <begin position="1"/>
        <end position="631"/>
    </location>
</feature>
<feature type="topological domain" description="Stromal" evidence="1">
    <location>
        <begin position="1"/>
        <end position="2"/>
    </location>
</feature>
<feature type="transmembrane region" description="Helical" evidence="1">
    <location>
        <begin position="3"/>
        <end position="23"/>
    </location>
</feature>
<feature type="topological domain" description="Lumenal" evidence="1">
    <location>
        <begin position="24"/>
        <end position="118"/>
    </location>
</feature>
<feature type="transmembrane region" description="Helical" evidence="1">
    <location>
        <begin position="119"/>
        <end position="139"/>
    </location>
</feature>
<feature type="topological domain" description="Stromal" evidence="1">
    <location>
        <begin position="140"/>
        <end position="631"/>
    </location>
</feature>
<feature type="active site" evidence="1">
    <location>
        <position position="435"/>
    </location>
</feature>
<feature type="binding site" evidence="1">
    <location>
        <begin position="213"/>
        <end position="220"/>
    </location>
    <ligand>
        <name>ATP</name>
        <dbReference type="ChEBI" id="CHEBI:30616"/>
    </ligand>
</feature>
<feature type="binding site" evidence="1">
    <location>
        <position position="434"/>
    </location>
    <ligand>
        <name>Zn(2+)</name>
        <dbReference type="ChEBI" id="CHEBI:29105"/>
        <note>catalytic</note>
    </ligand>
</feature>
<feature type="binding site" evidence="1">
    <location>
        <position position="438"/>
    </location>
    <ligand>
        <name>Zn(2+)</name>
        <dbReference type="ChEBI" id="CHEBI:29105"/>
        <note>catalytic</note>
    </ligand>
</feature>
<feature type="binding site" evidence="1">
    <location>
        <position position="512"/>
    </location>
    <ligand>
        <name>Zn(2+)</name>
        <dbReference type="ChEBI" id="CHEBI:29105"/>
        <note>catalytic</note>
    </ligand>
</feature>
<gene>
    <name evidence="1" type="primary">ftsH</name>
    <name type="synonym">ycf25</name>
</gene>
<organism>
    <name type="scientific">Guillardia theta</name>
    <name type="common">Cryptophyte</name>
    <name type="synonym">Cryptomonas phi</name>
    <dbReference type="NCBI Taxonomy" id="55529"/>
    <lineage>
        <taxon>Eukaryota</taxon>
        <taxon>Cryptophyceae</taxon>
        <taxon>Pyrenomonadales</taxon>
        <taxon>Geminigeraceae</taxon>
        <taxon>Guillardia</taxon>
    </lineage>
</organism>
<name>FTSH_GUITH</name>
<sequence>MKISWKNILLTLIPLGLISFLVWQGFNNTTNPQFTKNIASSRMTYGRFLEYLDLGWVKKVDLYDEGHTAIVEAIGPELGNRIQRIRVELPATAPELITKLRKANVDLDAHATNDSTPAWSLIGNLIFPILLIAGLAFLFRRSSNLPGGPGQAMNFGKSKARFQMEAKTGVTFNDVAGVDEAKEEFEEVVSFLKKPERFTAVGAKIPKGVLLVGPPGTGKTLLAKAIAGEAGVPFFSISGSEFVEMFVGVGASRVRDLFKKAKENSPCIVFIDEIDAVGRQRGTGIGGGNDEREQTLNQLLTEMDGFEGNTGIIIIAATNRVDVLDAALLRPGRFDRQVTVDVPDVKGRLEILNVHARNKKLDLSISLELIAKRTPGFSGADLANLLNEAAILTARRRKKQITISEIDASIDRVIAGMEGKALVDSKTKRLIAYHEVGHAIIGTLLKHHDPVQKVTLVPRGQAKGLTWFTPSEDQSLISRSQILARIMGALGGRAAEEVVFGLPEVTTGAGNDLQQVTSMARQMVTRFGMSNIGPLSLESQNSDPFLGRTMGSSSQYSEDIASRIDMQVRAIIQHCHTETVQIIKDNRVVIDKLVDLLIEKETIDGDEFRQIVGDFTSLPEKIDYKSQLKST</sequence>
<dbReference type="EC" id="3.4.24.-" evidence="1"/>
<dbReference type="EMBL" id="AF041468">
    <property type="protein sequence ID" value="AAC35738.1"/>
    <property type="molecule type" value="Genomic_DNA"/>
</dbReference>
<dbReference type="RefSeq" id="NP_050804.1">
    <property type="nucleotide sequence ID" value="NC_000926.1"/>
</dbReference>
<dbReference type="SMR" id="O78516"/>
<dbReference type="MEROPS" id="M41.017"/>
<dbReference type="GeneID" id="857112"/>
<dbReference type="HOGENOM" id="CLU_000688_16_2_1"/>
<dbReference type="OMA" id="AHPMEIN"/>
<dbReference type="GO" id="GO:0009535">
    <property type="term" value="C:chloroplast thylakoid membrane"/>
    <property type="evidence" value="ECO:0007669"/>
    <property type="project" value="UniProtKB-SubCell"/>
</dbReference>
<dbReference type="GO" id="GO:0005524">
    <property type="term" value="F:ATP binding"/>
    <property type="evidence" value="ECO:0007669"/>
    <property type="project" value="UniProtKB-UniRule"/>
</dbReference>
<dbReference type="GO" id="GO:0016887">
    <property type="term" value="F:ATP hydrolysis activity"/>
    <property type="evidence" value="ECO:0007669"/>
    <property type="project" value="UniProtKB-UniRule"/>
</dbReference>
<dbReference type="GO" id="GO:0004176">
    <property type="term" value="F:ATP-dependent peptidase activity"/>
    <property type="evidence" value="ECO:0007669"/>
    <property type="project" value="InterPro"/>
</dbReference>
<dbReference type="GO" id="GO:0004222">
    <property type="term" value="F:metalloendopeptidase activity"/>
    <property type="evidence" value="ECO:0007669"/>
    <property type="project" value="InterPro"/>
</dbReference>
<dbReference type="GO" id="GO:0008270">
    <property type="term" value="F:zinc ion binding"/>
    <property type="evidence" value="ECO:0007669"/>
    <property type="project" value="UniProtKB-UniRule"/>
</dbReference>
<dbReference type="GO" id="GO:0030163">
    <property type="term" value="P:protein catabolic process"/>
    <property type="evidence" value="ECO:0007669"/>
    <property type="project" value="UniProtKB-UniRule"/>
</dbReference>
<dbReference type="GO" id="GO:0006508">
    <property type="term" value="P:proteolysis"/>
    <property type="evidence" value="ECO:0007669"/>
    <property type="project" value="UniProtKB-KW"/>
</dbReference>
<dbReference type="CDD" id="cd19501">
    <property type="entry name" value="RecA-like_FtsH"/>
    <property type="match status" value="1"/>
</dbReference>
<dbReference type="FunFam" id="1.10.8.60:FF:000001">
    <property type="entry name" value="ATP-dependent zinc metalloprotease FtsH"/>
    <property type="match status" value="1"/>
</dbReference>
<dbReference type="FunFam" id="1.20.58.760:FF:000001">
    <property type="entry name" value="ATP-dependent zinc metalloprotease FtsH"/>
    <property type="match status" value="1"/>
</dbReference>
<dbReference type="FunFam" id="3.40.50.300:FF:000001">
    <property type="entry name" value="ATP-dependent zinc metalloprotease FtsH"/>
    <property type="match status" value="1"/>
</dbReference>
<dbReference type="Gene3D" id="1.10.8.60">
    <property type="match status" value="1"/>
</dbReference>
<dbReference type="Gene3D" id="3.40.50.300">
    <property type="entry name" value="P-loop containing nucleotide triphosphate hydrolases"/>
    <property type="match status" value="1"/>
</dbReference>
<dbReference type="Gene3D" id="1.20.58.760">
    <property type="entry name" value="Peptidase M41"/>
    <property type="match status" value="1"/>
</dbReference>
<dbReference type="HAMAP" id="MF_01458">
    <property type="entry name" value="FtsH"/>
    <property type="match status" value="1"/>
</dbReference>
<dbReference type="InterPro" id="IPR003593">
    <property type="entry name" value="AAA+_ATPase"/>
</dbReference>
<dbReference type="InterPro" id="IPR041569">
    <property type="entry name" value="AAA_lid_3"/>
</dbReference>
<dbReference type="InterPro" id="IPR003959">
    <property type="entry name" value="ATPase_AAA_core"/>
</dbReference>
<dbReference type="InterPro" id="IPR003960">
    <property type="entry name" value="ATPase_AAA_CS"/>
</dbReference>
<dbReference type="InterPro" id="IPR005936">
    <property type="entry name" value="FtsH"/>
</dbReference>
<dbReference type="InterPro" id="IPR027417">
    <property type="entry name" value="P-loop_NTPase"/>
</dbReference>
<dbReference type="InterPro" id="IPR011546">
    <property type="entry name" value="Pept_M41_FtsH_extracell"/>
</dbReference>
<dbReference type="InterPro" id="IPR000642">
    <property type="entry name" value="Peptidase_M41"/>
</dbReference>
<dbReference type="InterPro" id="IPR037219">
    <property type="entry name" value="Peptidase_M41-like"/>
</dbReference>
<dbReference type="NCBIfam" id="TIGR01241">
    <property type="entry name" value="FtsH_fam"/>
    <property type="match status" value="1"/>
</dbReference>
<dbReference type="PANTHER" id="PTHR23076:SF139">
    <property type="entry name" value="ATP-DEPENDENT ZINC METALLOPROTEASE FTSH 2, CHLOROPLASTIC"/>
    <property type="match status" value="1"/>
</dbReference>
<dbReference type="PANTHER" id="PTHR23076">
    <property type="entry name" value="METALLOPROTEASE M41 FTSH"/>
    <property type="match status" value="1"/>
</dbReference>
<dbReference type="Pfam" id="PF00004">
    <property type="entry name" value="AAA"/>
    <property type="match status" value="1"/>
</dbReference>
<dbReference type="Pfam" id="PF17862">
    <property type="entry name" value="AAA_lid_3"/>
    <property type="match status" value="1"/>
</dbReference>
<dbReference type="Pfam" id="PF06480">
    <property type="entry name" value="FtsH_ext"/>
    <property type="match status" value="1"/>
</dbReference>
<dbReference type="Pfam" id="PF01434">
    <property type="entry name" value="Peptidase_M41"/>
    <property type="match status" value="1"/>
</dbReference>
<dbReference type="SMART" id="SM00382">
    <property type="entry name" value="AAA"/>
    <property type="match status" value="1"/>
</dbReference>
<dbReference type="SUPFAM" id="SSF140990">
    <property type="entry name" value="FtsH protease domain-like"/>
    <property type="match status" value="1"/>
</dbReference>
<dbReference type="SUPFAM" id="SSF52540">
    <property type="entry name" value="P-loop containing nucleoside triphosphate hydrolases"/>
    <property type="match status" value="1"/>
</dbReference>
<dbReference type="PROSITE" id="PS00674">
    <property type="entry name" value="AAA"/>
    <property type="match status" value="1"/>
</dbReference>
<keyword id="KW-0067">ATP-binding</keyword>
<keyword id="KW-0150">Chloroplast</keyword>
<keyword id="KW-0378">Hydrolase</keyword>
<keyword id="KW-0472">Membrane</keyword>
<keyword id="KW-0479">Metal-binding</keyword>
<keyword id="KW-0482">Metalloprotease</keyword>
<keyword id="KW-0547">Nucleotide-binding</keyword>
<keyword id="KW-0934">Plastid</keyword>
<keyword id="KW-0645">Protease</keyword>
<keyword id="KW-0793">Thylakoid</keyword>
<keyword id="KW-0812">Transmembrane</keyword>
<keyword id="KW-1133">Transmembrane helix</keyword>
<keyword id="KW-0862">Zinc</keyword>
<accession>O78516</accession>
<evidence type="ECO:0000255" key="1">
    <source>
        <dbReference type="HAMAP-Rule" id="MF_01458"/>
    </source>
</evidence>
<comment type="function">
    <text evidence="1">Acts as a processive, ATP-dependent zinc metallopeptidase.</text>
</comment>
<comment type="cofactor">
    <cofactor evidence="1">
        <name>Zn(2+)</name>
        <dbReference type="ChEBI" id="CHEBI:29105"/>
    </cofactor>
    <text evidence="1">Binds 1 zinc ion per subunit.</text>
</comment>
<comment type="subunit">
    <text evidence="1">Homohexamer.</text>
</comment>
<comment type="subcellular location">
    <subcellularLocation>
        <location evidence="1">Plastid</location>
        <location evidence="1">Chloroplast thylakoid membrane</location>
        <topology evidence="1">Multi-pass membrane protein</topology>
        <orientation evidence="1">Stromal side</orientation>
    </subcellularLocation>
</comment>
<comment type="similarity">
    <text evidence="1">In the central section; belongs to the AAA ATPase family.</text>
</comment>
<comment type="similarity">
    <text evidence="1">In the C-terminal section; belongs to the peptidase M41 family.</text>
</comment>
<geneLocation type="chloroplast"/>